<gene>
    <name evidence="1" type="primary">rpoB</name>
    <name type="ordered locus">TW081</name>
</gene>
<reference key="1">
    <citation type="journal article" date="2003" name="Lancet">
        <title>Sequencing and analysis of the genome of the Whipple's disease bacterium Tropheryma whipplei.</title>
        <authorList>
            <person name="Bentley S.D."/>
            <person name="Maiwald M."/>
            <person name="Murphy L.D."/>
            <person name="Pallen M.J."/>
            <person name="Yeats C.A."/>
            <person name="Dover L.G."/>
            <person name="Norbertczak H.T."/>
            <person name="Besra G.S."/>
            <person name="Quail M.A."/>
            <person name="Harris D.E."/>
            <person name="von Herbay A."/>
            <person name="Goble A."/>
            <person name="Rutter S."/>
            <person name="Squares R."/>
            <person name="Squares S."/>
            <person name="Barrell B.G."/>
            <person name="Parkhill J."/>
            <person name="Relman D.A."/>
        </authorList>
    </citation>
    <scope>NUCLEOTIDE SEQUENCE [LARGE SCALE GENOMIC DNA]</scope>
    <source>
        <strain>TW08/27</strain>
    </source>
</reference>
<organism>
    <name type="scientific">Tropheryma whipplei (strain TW08/27)</name>
    <name type="common">Whipple's bacillus</name>
    <dbReference type="NCBI Taxonomy" id="218496"/>
    <lineage>
        <taxon>Bacteria</taxon>
        <taxon>Bacillati</taxon>
        <taxon>Actinomycetota</taxon>
        <taxon>Actinomycetes</taxon>
        <taxon>Micrococcales</taxon>
        <taxon>Tropherymataceae</taxon>
        <taxon>Tropheryma</taxon>
    </lineage>
</organism>
<keyword id="KW-0240">DNA-directed RNA polymerase</keyword>
<keyword id="KW-0548">Nucleotidyltransferase</keyword>
<keyword id="KW-0804">Transcription</keyword>
<keyword id="KW-0808">Transferase</keyword>
<proteinExistence type="inferred from homology"/>
<feature type="chain" id="PRO_0000047988" description="DNA-directed RNA polymerase subunit beta">
    <location>
        <begin position="1"/>
        <end position="1157"/>
    </location>
</feature>
<dbReference type="EC" id="2.7.7.6" evidence="1"/>
<dbReference type="EMBL" id="BX251410">
    <property type="protein sequence ID" value="CAD66766.1"/>
    <property type="status" value="ALT_INIT"/>
    <property type="molecule type" value="Genomic_DNA"/>
</dbReference>
<dbReference type="SMR" id="P59642"/>
<dbReference type="KEGG" id="tws:TW081"/>
<dbReference type="HOGENOM" id="CLU_000524_4_1_11"/>
<dbReference type="GO" id="GO:0000428">
    <property type="term" value="C:DNA-directed RNA polymerase complex"/>
    <property type="evidence" value="ECO:0007669"/>
    <property type="project" value="UniProtKB-KW"/>
</dbReference>
<dbReference type="GO" id="GO:0003677">
    <property type="term" value="F:DNA binding"/>
    <property type="evidence" value="ECO:0007669"/>
    <property type="project" value="UniProtKB-UniRule"/>
</dbReference>
<dbReference type="GO" id="GO:0003899">
    <property type="term" value="F:DNA-directed RNA polymerase activity"/>
    <property type="evidence" value="ECO:0007669"/>
    <property type="project" value="UniProtKB-UniRule"/>
</dbReference>
<dbReference type="GO" id="GO:0032549">
    <property type="term" value="F:ribonucleoside binding"/>
    <property type="evidence" value="ECO:0007669"/>
    <property type="project" value="InterPro"/>
</dbReference>
<dbReference type="GO" id="GO:0006351">
    <property type="term" value="P:DNA-templated transcription"/>
    <property type="evidence" value="ECO:0007669"/>
    <property type="project" value="UniProtKB-UniRule"/>
</dbReference>
<dbReference type="CDD" id="cd00653">
    <property type="entry name" value="RNA_pol_B_RPB2"/>
    <property type="match status" value="1"/>
</dbReference>
<dbReference type="Gene3D" id="2.40.50.100">
    <property type="match status" value="1"/>
</dbReference>
<dbReference type="Gene3D" id="2.40.50.150">
    <property type="match status" value="1"/>
</dbReference>
<dbReference type="Gene3D" id="3.90.1100.10">
    <property type="match status" value="1"/>
</dbReference>
<dbReference type="Gene3D" id="2.30.150.10">
    <property type="entry name" value="DNA-directed RNA polymerase, beta subunit, external 1 domain"/>
    <property type="match status" value="1"/>
</dbReference>
<dbReference type="Gene3D" id="2.40.270.10">
    <property type="entry name" value="DNA-directed RNA polymerase, subunit 2, domain 6"/>
    <property type="match status" value="1"/>
</dbReference>
<dbReference type="Gene3D" id="3.90.1800.10">
    <property type="entry name" value="RNA polymerase alpha subunit dimerisation domain"/>
    <property type="match status" value="1"/>
</dbReference>
<dbReference type="Gene3D" id="3.90.1110.10">
    <property type="entry name" value="RNA polymerase Rpb2, domain 2"/>
    <property type="match status" value="1"/>
</dbReference>
<dbReference type="HAMAP" id="MF_01321">
    <property type="entry name" value="RNApol_bact_RpoB"/>
    <property type="match status" value="1"/>
</dbReference>
<dbReference type="InterPro" id="IPR042107">
    <property type="entry name" value="DNA-dir_RNA_pol_bsu_ext_1_sf"/>
</dbReference>
<dbReference type="InterPro" id="IPR019462">
    <property type="entry name" value="DNA-dir_RNA_pol_bsu_external_1"/>
</dbReference>
<dbReference type="InterPro" id="IPR015712">
    <property type="entry name" value="DNA-dir_RNA_pol_su2"/>
</dbReference>
<dbReference type="InterPro" id="IPR007120">
    <property type="entry name" value="DNA-dir_RNAP_su2_dom"/>
</dbReference>
<dbReference type="InterPro" id="IPR037033">
    <property type="entry name" value="DNA-dir_RNAP_su2_hyb_sf"/>
</dbReference>
<dbReference type="InterPro" id="IPR010243">
    <property type="entry name" value="RNA_pol_bsu_bac"/>
</dbReference>
<dbReference type="InterPro" id="IPR007121">
    <property type="entry name" value="RNA_pol_bsu_CS"/>
</dbReference>
<dbReference type="InterPro" id="IPR007644">
    <property type="entry name" value="RNA_pol_bsu_protrusion"/>
</dbReference>
<dbReference type="InterPro" id="IPR007642">
    <property type="entry name" value="RNA_pol_Rpb2_2"/>
</dbReference>
<dbReference type="InterPro" id="IPR037034">
    <property type="entry name" value="RNA_pol_Rpb2_2_sf"/>
</dbReference>
<dbReference type="InterPro" id="IPR007645">
    <property type="entry name" value="RNA_pol_Rpb2_3"/>
</dbReference>
<dbReference type="InterPro" id="IPR007641">
    <property type="entry name" value="RNA_pol_Rpb2_7"/>
</dbReference>
<dbReference type="InterPro" id="IPR014724">
    <property type="entry name" value="RNA_pol_RPB2_OB-fold"/>
</dbReference>
<dbReference type="NCBIfam" id="NF001616">
    <property type="entry name" value="PRK00405.1"/>
    <property type="match status" value="1"/>
</dbReference>
<dbReference type="NCBIfam" id="TIGR02013">
    <property type="entry name" value="rpoB"/>
    <property type="match status" value="1"/>
</dbReference>
<dbReference type="PANTHER" id="PTHR20856">
    <property type="entry name" value="DNA-DIRECTED RNA POLYMERASE I SUBUNIT 2"/>
    <property type="match status" value="1"/>
</dbReference>
<dbReference type="Pfam" id="PF04563">
    <property type="entry name" value="RNA_pol_Rpb2_1"/>
    <property type="match status" value="1"/>
</dbReference>
<dbReference type="Pfam" id="PF04561">
    <property type="entry name" value="RNA_pol_Rpb2_2"/>
    <property type="match status" value="1"/>
</dbReference>
<dbReference type="Pfam" id="PF04565">
    <property type="entry name" value="RNA_pol_Rpb2_3"/>
    <property type="match status" value="1"/>
</dbReference>
<dbReference type="Pfam" id="PF10385">
    <property type="entry name" value="RNA_pol_Rpb2_45"/>
    <property type="match status" value="1"/>
</dbReference>
<dbReference type="Pfam" id="PF00562">
    <property type="entry name" value="RNA_pol_Rpb2_6"/>
    <property type="match status" value="1"/>
</dbReference>
<dbReference type="Pfam" id="PF04560">
    <property type="entry name" value="RNA_pol_Rpb2_7"/>
    <property type="match status" value="1"/>
</dbReference>
<dbReference type="SUPFAM" id="SSF64484">
    <property type="entry name" value="beta and beta-prime subunits of DNA dependent RNA-polymerase"/>
    <property type="match status" value="1"/>
</dbReference>
<dbReference type="PROSITE" id="PS01166">
    <property type="entry name" value="RNA_POL_BETA"/>
    <property type="match status" value="1"/>
</dbReference>
<name>RPOB_TROW8</name>
<evidence type="ECO:0000255" key="1">
    <source>
        <dbReference type="HAMAP-Rule" id="MF_01321"/>
    </source>
</evidence>
<evidence type="ECO:0000305" key="2"/>
<comment type="function">
    <text evidence="1">DNA-dependent RNA polymerase catalyzes the transcription of DNA into RNA using the four ribonucleoside triphosphates as substrates.</text>
</comment>
<comment type="catalytic activity">
    <reaction evidence="1">
        <text>RNA(n) + a ribonucleoside 5'-triphosphate = RNA(n+1) + diphosphate</text>
        <dbReference type="Rhea" id="RHEA:21248"/>
        <dbReference type="Rhea" id="RHEA-COMP:14527"/>
        <dbReference type="Rhea" id="RHEA-COMP:17342"/>
        <dbReference type="ChEBI" id="CHEBI:33019"/>
        <dbReference type="ChEBI" id="CHEBI:61557"/>
        <dbReference type="ChEBI" id="CHEBI:140395"/>
        <dbReference type="EC" id="2.7.7.6"/>
    </reaction>
</comment>
<comment type="subunit">
    <text evidence="1">The RNAP catalytic core consists of 2 alpha, 1 beta, 1 beta' and 1 omega subunit. When a sigma factor is associated with the core the holoenzyme is formed, which can initiate transcription.</text>
</comment>
<comment type="similarity">
    <text evidence="1">Belongs to the RNA polymerase beta chain family.</text>
</comment>
<comment type="sequence caution" evidence="2">
    <conflict type="erroneous initiation">
        <sequence resource="EMBL-CDS" id="CAD66766"/>
    </conflict>
</comment>
<accession>P59642</accession>
<sequence>MSLFGVGFLAFAKGKRVCAIGRSSLGKISDPLEVPNLLDLQLDSFDWLIGGPRWRAALDAYRKNPSGAPIAEKSGLDEVFDEISPIEDSAGNMQLNFSKPVLEAEELSVRECRVRGRTYSAPLYVEAEFMNHDTGEIKTQTVFMGDFPLMTDKGTFVINGTERVVVSQLVRSPGVYFERTPEKNSEKDLFSGRIIPARGAWLEFEVDRHDQLGVRVDRKRRQPVIFFLRAIGMTDDEIRDAFGEFESISVQHEKNIGLSRDDALREIYRRVRPGEQASAEAGRALLENFYFTSRRFDLARVGRYKVNRKLGVDVDPTRMVLTRSDIIATIRYLAALHLGFSEVAVLNSNKSVPISTDDIDHLGNRRIRPVGELVQNQLRAGLARMERVVRERMTTQDIEAIIPQTLINVMPIVAALKEFYGTSQLSQFMDQNNPLAGLTHKRRLSALGPGGLSRERAGVEVRDVNPSHYGRMCPIETPEGPNIGLIGSLACYSRVNSFGFIETPYRRVVNGKVTDDIEYMTATQEDEHAIAQASTPLRPDNSFVDERVLVRRKGGEVEVVPADQVDYMDVSGRQMVSVATSLIPFLEHNDANRALMGSNMQRQAVPLLVTESPLVGTGMERYVAIDAGDVLIAEDPGIVGDVSADVVTVKQDDGKHRDYHVGKFVRSNQGNCYNQRVVVRSGDRVEKGTVLADGPCTDKGELSLGRNLLVAFMPWEGYNFEDAIIISQNLVKDDTLSSIHIEEHEVSTRDTKLGSEEITRDLPNVSMDYIKDLDERGIIRIGAEVGPGDILVGKVTPKGETELSAEERLLRAIFNEKSMEVRDTSLKVPHGQQGTVIDVKLFDAVDGEDKLGAGINQRVVVYIAHKRKITEGDKLAGRHGNKGVISKILPVEDMPFMADGTPVDIILNPLGVPARMNFGQVLETHLGWISKQGWKIEGDPDWAKDIRVREAQPDSRVSSPVFDGISEGEITGLFSSVFPNRDGERAVGSDGKAILYDGRTGEPFPEPISVGYMYVLKLHHLVDDKIHARSTGPYSMITQQPLGGKAQFGGQRFGEMEVWALEAYGAAHALQELLTIKSDDVVGRVKVYDAIVKGYPIPTPGVPESFKVIVKEMQSLCINIEVVSDGEDDVSADAETLQIEEGLDTSPKVEVGSLEEV</sequence>
<protein>
    <recommendedName>
        <fullName evidence="1">DNA-directed RNA polymerase subunit beta</fullName>
        <shortName evidence="1">RNAP subunit beta</shortName>
        <ecNumber evidence="1">2.7.7.6</ecNumber>
    </recommendedName>
    <alternativeName>
        <fullName evidence="1">RNA polymerase subunit beta</fullName>
    </alternativeName>
    <alternativeName>
        <fullName evidence="1">Transcriptase subunit beta</fullName>
    </alternativeName>
</protein>